<dbReference type="EMBL" id="AE009947">
    <property type="protein sequence ID" value="AAT44714.1"/>
    <property type="status" value="ALT_SEQ"/>
    <property type="molecule type" value="Genomic_DNA"/>
</dbReference>
<dbReference type="SMR" id="Q6L378"/>
<dbReference type="GO" id="GO:0009507">
    <property type="term" value="C:chloroplast"/>
    <property type="evidence" value="ECO:0007669"/>
    <property type="project" value="UniProtKB-SubCell"/>
</dbReference>
<dbReference type="GO" id="GO:1990904">
    <property type="term" value="C:ribonucleoprotein complex"/>
    <property type="evidence" value="ECO:0007669"/>
    <property type="project" value="UniProtKB-KW"/>
</dbReference>
<dbReference type="GO" id="GO:0005840">
    <property type="term" value="C:ribosome"/>
    <property type="evidence" value="ECO:0007669"/>
    <property type="project" value="UniProtKB-KW"/>
</dbReference>
<dbReference type="GO" id="GO:0019843">
    <property type="term" value="F:rRNA binding"/>
    <property type="evidence" value="ECO:0007669"/>
    <property type="project" value="UniProtKB-UniRule"/>
</dbReference>
<dbReference type="GO" id="GO:0003735">
    <property type="term" value="F:structural constituent of ribosome"/>
    <property type="evidence" value="ECO:0007669"/>
    <property type="project" value="InterPro"/>
</dbReference>
<dbReference type="GO" id="GO:0000027">
    <property type="term" value="P:ribosomal large subunit assembly"/>
    <property type="evidence" value="ECO:0007669"/>
    <property type="project" value="UniProtKB-UniRule"/>
</dbReference>
<dbReference type="GO" id="GO:0006412">
    <property type="term" value="P:translation"/>
    <property type="evidence" value="ECO:0007669"/>
    <property type="project" value="InterPro"/>
</dbReference>
<dbReference type="CDD" id="cd07026">
    <property type="entry name" value="Ribosomal_L20"/>
    <property type="match status" value="1"/>
</dbReference>
<dbReference type="FunFam" id="1.10.1900.20:FF:000002">
    <property type="entry name" value="50S ribosomal protein L20, chloroplastic"/>
    <property type="match status" value="1"/>
</dbReference>
<dbReference type="Gene3D" id="6.10.160.10">
    <property type="match status" value="1"/>
</dbReference>
<dbReference type="Gene3D" id="1.10.1900.20">
    <property type="entry name" value="Ribosomal protein L20"/>
    <property type="match status" value="1"/>
</dbReference>
<dbReference type="HAMAP" id="MF_00382">
    <property type="entry name" value="Ribosomal_bL20"/>
    <property type="match status" value="1"/>
</dbReference>
<dbReference type="InterPro" id="IPR005813">
    <property type="entry name" value="Ribosomal_bL20"/>
</dbReference>
<dbReference type="InterPro" id="IPR049946">
    <property type="entry name" value="RIBOSOMAL_L20_CS"/>
</dbReference>
<dbReference type="InterPro" id="IPR035566">
    <property type="entry name" value="Ribosomal_protein_bL20_C"/>
</dbReference>
<dbReference type="NCBIfam" id="TIGR01032">
    <property type="entry name" value="rplT_bact"/>
    <property type="match status" value="1"/>
</dbReference>
<dbReference type="PANTHER" id="PTHR10986">
    <property type="entry name" value="39S RIBOSOMAL PROTEIN L20"/>
    <property type="match status" value="1"/>
</dbReference>
<dbReference type="Pfam" id="PF00453">
    <property type="entry name" value="Ribosomal_L20"/>
    <property type="match status" value="1"/>
</dbReference>
<dbReference type="PRINTS" id="PR00062">
    <property type="entry name" value="RIBOSOMALL20"/>
</dbReference>
<dbReference type="SUPFAM" id="SSF74731">
    <property type="entry name" value="Ribosomal protein L20"/>
    <property type="match status" value="1"/>
</dbReference>
<dbReference type="PROSITE" id="PS00937">
    <property type="entry name" value="RIBOSOMAL_L20"/>
    <property type="match status" value="1"/>
</dbReference>
<gene>
    <name evidence="1" type="primary">rpl20</name>
    <name type="ordered locus">PS148</name>
</gene>
<geneLocation type="chloroplast"/>
<sequence length="119" mass="14286">MTRVPRGYIARRRRTKMRSFASNFRGAHLRLNRMITQQVRRAFVSSHRDRGRQKRDFRRLWITRINAATRVYNVFNSYSKLIHNLSKKELILNRKMLAQVAVLNPNNLYTISNKIRTIN</sequence>
<proteinExistence type="evidence at transcript level"/>
<accession>Q6L378</accession>
<feature type="chain" id="PRO_0000177309" description="Large ribosomal subunit protein bL20c">
    <location>
        <begin position="1"/>
        <end position="119"/>
    </location>
</feature>
<keyword id="KW-0150">Chloroplast</keyword>
<keyword id="KW-0934">Plastid</keyword>
<keyword id="KW-0687">Ribonucleoprotein</keyword>
<keyword id="KW-0689">Ribosomal protein</keyword>
<keyword id="KW-0691">RNA editing</keyword>
<keyword id="KW-0694">RNA-binding</keyword>
<keyword id="KW-0699">rRNA-binding</keyword>
<evidence type="ECO:0000255" key="1">
    <source>
        <dbReference type="HAMAP-Rule" id="MF_00382"/>
    </source>
</evidence>
<evidence type="ECO:0000269" key="2">
    <source>
    </source>
</evidence>
<evidence type="ECO:0000305" key="3"/>
<comment type="function">
    <text evidence="1">Binds directly to 23S ribosomal RNA and is necessary for the in vitro assembly process of the 50S ribosomal subunit. It is not involved in the protein synthesizing functions of that subunit.</text>
</comment>
<comment type="subcellular location">
    <subcellularLocation>
        <location>Plastid</location>
        <location>Chloroplast</location>
    </subcellularLocation>
</comment>
<comment type="RNA editing">
    <location>
        <position position="103" evidence="2"/>
    </location>
</comment>
<comment type="similarity">
    <text evidence="1">Belongs to the bacterial ribosomal protein bL20 family.</text>
</comment>
<protein>
    <recommendedName>
        <fullName evidence="1">Large ribosomal subunit protein bL20c</fullName>
    </recommendedName>
    <alternativeName>
        <fullName evidence="3">50S ribosomal protein L20, chloroplastic</fullName>
    </alternativeName>
</protein>
<name>RK20_SACHY</name>
<organism>
    <name type="scientific">Saccharum hybrid</name>
    <name type="common">Sugarcane</name>
    <dbReference type="NCBI Taxonomy" id="15819"/>
    <lineage>
        <taxon>Eukaryota</taxon>
        <taxon>Viridiplantae</taxon>
        <taxon>Streptophyta</taxon>
        <taxon>Embryophyta</taxon>
        <taxon>Tracheophyta</taxon>
        <taxon>Spermatophyta</taxon>
        <taxon>Magnoliopsida</taxon>
        <taxon>Liliopsida</taxon>
        <taxon>Poales</taxon>
        <taxon>Poaceae</taxon>
        <taxon>PACMAD clade</taxon>
        <taxon>Panicoideae</taxon>
        <taxon>Andropogonodae</taxon>
        <taxon>Andropogoneae</taxon>
        <taxon>Saccharinae</taxon>
        <taxon>Saccharum</taxon>
    </lineage>
</organism>
<reference key="1">
    <citation type="journal article" date="2004" name="Curr. Genet.">
        <title>Structural features and transcript-editing analysis of sugarcane (Saccharum officinarum L.) chloroplast genome.</title>
        <authorList>
            <person name="Calsa T. Jr."/>
            <person name="Carraro D.M."/>
            <person name="Benatti M.R."/>
            <person name="Barbosa A.C."/>
            <person name="Kitajima J.P."/>
            <person name="Carrer H."/>
        </authorList>
    </citation>
    <scope>NUCLEOTIDE SEQUENCE [LARGE SCALE GENOMIC DNA]</scope>
    <scope>RNA EDITING</scope>
    <source>
        <strain>cv. SP-80-3280</strain>
    </source>
</reference>